<organism>
    <name type="scientific">Stutzerimonas stutzeri</name>
    <name type="common">Pseudomonas stutzeri</name>
    <dbReference type="NCBI Taxonomy" id="316"/>
    <lineage>
        <taxon>Bacteria</taxon>
        <taxon>Pseudomonadati</taxon>
        <taxon>Pseudomonadota</taxon>
        <taxon>Gammaproteobacteria</taxon>
        <taxon>Pseudomonadales</taxon>
        <taxon>Pseudomonadaceae</taxon>
        <taxon>Stutzerimonas</taxon>
    </lineage>
</organism>
<gene>
    <name evidence="5" type="primary">nosL</name>
</gene>
<feature type="signal peptide" evidence="2">
    <location>
        <begin position="1"/>
        <end position="23"/>
    </location>
</feature>
<feature type="chain" id="PRO_0000439349" description="Copper-binding lipoprotein NosL" evidence="2">
    <location>
        <begin position="24"/>
        <end position="190"/>
    </location>
</feature>
<feature type="region of interest" description="Disordered" evidence="3">
    <location>
        <begin position="170"/>
        <end position="190"/>
    </location>
</feature>
<feature type="compositionally biased region" description="Low complexity" evidence="3">
    <location>
        <begin position="180"/>
        <end position="190"/>
    </location>
</feature>
<feature type="lipid moiety-binding region" description="N-palmitoyl cysteine" evidence="2">
    <location>
        <position position="24"/>
    </location>
</feature>
<feature type="lipid moiety-binding region" description="S-diacylglycerol cysteine" evidence="2">
    <location>
        <position position="24"/>
    </location>
</feature>
<feature type="helix" evidence="8">
    <location>
        <begin position="31"/>
        <end position="33"/>
    </location>
</feature>
<feature type="strand" evidence="8">
    <location>
        <begin position="46"/>
        <end position="48"/>
    </location>
</feature>
<feature type="helix" evidence="7">
    <location>
        <begin position="52"/>
        <end position="54"/>
    </location>
</feature>
<feature type="strand" evidence="8">
    <location>
        <begin position="60"/>
        <end position="63"/>
    </location>
</feature>
<feature type="strand" evidence="8">
    <location>
        <begin position="65"/>
        <end position="67"/>
    </location>
</feature>
<feature type="strand" evidence="8">
    <location>
        <begin position="69"/>
        <end position="72"/>
    </location>
</feature>
<feature type="helix" evidence="8">
    <location>
        <begin position="74"/>
        <end position="81"/>
    </location>
</feature>
<feature type="helix" evidence="8">
    <location>
        <begin position="84"/>
        <end position="87"/>
    </location>
</feature>
<feature type="strand" evidence="8">
    <location>
        <begin position="92"/>
        <end position="96"/>
    </location>
</feature>
<feature type="strand" evidence="8">
    <location>
        <begin position="98"/>
        <end position="101"/>
    </location>
</feature>
<feature type="strand" evidence="8">
    <location>
        <begin position="103"/>
        <end position="105"/>
    </location>
</feature>
<feature type="strand" evidence="8">
    <location>
        <begin position="111"/>
        <end position="116"/>
    </location>
</feature>
<feature type="strand" evidence="8">
    <location>
        <begin position="118"/>
        <end position="122"/>
    </location>
</feature>
<feature type="strand" evidence="8">
    <location>
        <begin position="128"/>
        <end position="130"/>
    </location>
</feature>
<feature type="strand" evidence="8">
    <location>
        <begin position="134"/>
        <end position="138"/>
    </location>
</feature>
<feature type="helix" evidence="8">
    <location>
        <begin position="139"/>
        <end position="147"/>
    </location>
</feature>
<feature type="strand" evidence="8">
    <location>
        <begin position="152"/>
        <end position="154"/>
    </location>
</feature>
<feature type="helix" evidence="8">
    <location>
        <begin position="161"/>
        <end position="172"/>
    </location>
</feature>
<evidence type="ECO:0000250" key="1">
    <source>
        <dbReference type="UniProtKB" id="O68481"/>
    </source>
</evidence>
<evidence type="ECO:0000255" key="2">
    <source>
        <dbReference type="PROSITE-ProRule" id="PRU00303"/>
    </source>
</evidence>
<evidence type="ECO:0000256" key="3">
    <source>
        <dbReference type="SAM" id="MobiDB-lite"/>
    </source>
</evidence>
<evidence type="ECO:0000269" key="4">
    <source>
    </source>
</evidence>
<evidence type="ECO:0000303" key="5">
    <source>
    </source>
</evidence>
<evidence type="ECO:0000305" key="6"/>
<evidence type="ECO:0007829" key="7">
    <source>
        <dbReference type="PDB" id="7OSG"/>
    </source>
</evidence>
<evidence type="ECO:0007829" key="8">
    <source>
        <dbReference type="PDB" id="7ZNQ"/>
    </source>
</evidence>
<proteinExistence type="evidence at protein level"/>
<name>NOSL_STUST</name>
<comment type="function">
    <text evidence="1">May act as a metallochaperone involved in nitrous oxide reductase assembly. Specifically binds Cu(+).</text>
</comment>
<comment type="subunit">
    <text evidence="1">Monomer.</text>
</comment>
<comment type="subcellular location">
    <subcellularLocation>
        <location evidence="2">Cell membrane</location>
        <topology evidence="2">Lipid-anchor</topology>
        <orientation evidence="1">Periplasmic side</orientation>
    </subcellularLocation>
</comment>
<comment type="induction">
    <text evidence="4">Induced in response to denitrifying conditions. Activation requires NosR and DnrD regulators.</text>
</comment>
<comment type="similarity">
    <text evidence="6">Belongs to the NosL family.</text>
</comment>
<dbReference type="EMBL" id="X53676">
    <property type="protein sequence ID" value="CAA93438.1"/>
    <property type="molecule type" value="Genomic_DNA"/>
</dbReference>
<dbReference type="PIR" id="S65468">
    <property type="entry name" value="S65468"/>
</dbReference>
<dbReference type="RefSeq" id="WP_003279963.1">
    <property type="nucleotide sequence ID" value="NZ_CP036186.1"/>
</dbReference>
<dbReference type="PDB" id="7OSF">
    <property type="method" value="EM"/>
    <property type="resolution" value="3.80 A"/>
    <property type="chains" value="H=1-190"/>
</dbReference>
<dbReference type="PDB" id="7OSG">
    <property type="method" value="EM"/>
    <property type="resolution" value="3.30 A"/>
    <property type="chains" value="H=1-190"/>
</dbReference>
<dbReference type="PDB" id="7OSH">
    <property type="method" value="EM"/>
    <property type="resolution" value="3.80 A"/>
    <property type="chains" value="H=1-190"/>
</dbReference>
<dbReference type="PDB" id="7OSI">
    <property type="method" value="EM"/>
    <property type="resolution" value="3.80 A"/>
    <property type="chains" value="H=1-190"/>
</dbReference>
<dbReference type="PDB" id="7OSJ">
    <property type="method" value="EM"/>
    <property type="resolution" value="3.80 A"/>
    <property type="chains" value="H=1-190"/>
</dbReference>
<dbReference type="PDB" id="7ZNQ">
    <property type="method" value="EM"/>
    <property type="resolution" value="3.04 A"/>
    <property type="chains" value="L=1-190"/>
</dbReference>
<dbReference type="PDBsum" id="7OSF"/>
<dbReference type="PDBsum" id="7OSG"/>
<dbReference type="PDBsum" id="7OSH"/>
<dbReference type="PDBsum" id="7OSI"/>
<dbReference type="PDBsum" id="7OSJ"/>
<dbReference type="PDBsum" id="7ZNQ"/>
<dbReference type="EMDB" id="EMD-13049"/>
<dbReference type="EMDB" id="EMD-13050"/>
<dbReference type="EMDB" id="EMD-13051"/>
<dbReference type="EMDB" id="EMD-13052"/>
<dbReference type="EMDB" id="EMD-13053"/>
<dbReference type="EMDB" id="EMD-14813"/>
<dbReference type="SMR" id="Q52529"/>
<dbReference type="GO" id="GO:0005886">
    <property type="term" value="C:plasma membrane"/>
    <property type="evidence" value="ECO:0007669"/>
    <property type="project" value="UniProtKB-SubCell"/>
</dbReference>
<dbReference type="GO" id="GO:0046872">
    <property type="term" value="F:metal ion binding"/>
    <property type="evidence" value="ECO:0007669"/>
    <property type="project" value="UniProtKB-KW"/>
</dbReference>
<dbReference type="Gene3D" id="3.30.70.2050">
    <property type="match status" value="1"/>
</dbReference>
<dbReference type="Gene3D" id="3.30.70.2060">
    <property type="match status" value="1"/>
</dbReference>
<dbReference type="InterPro" id="IPR008719">
    <property type="entry name" value="N2O_reductase_NosL"/>
</dbReference>
<dbReference type="PANTHER" id="PTHR41247">
    <property type="entry name" value="HTH-TYPE TRANSCRIPTIONAL REPRESSOR YCNK"/>
    <property type="match status" value="1"/>
</dbReference>
<dbReference type="PANTHER" id="PTHR41247:SF1">
    <property type="entry name" value="HTH-TYPE TRANSCRIPTIONAL REPRESSOR YCNK"/>
    <property type="match status" value="1"/>
</dbReference>
<dbReference type="Pfam" id="PF05573">
    <property type="entry name" value="NosL"/>
    <property type="match status" value="1"/>
</dbReference>
<dbReference type="SUPFAM" id="SSF160387">
    <property type="entry name" value="NosL/MerB-like"/>
    <property type="match status" value="1"/>
</dbReference>
<dbReference type="PROSITE" id="PS51257">
    <property type="entry name" value="PROKAR_LIPOPROTEIN"/>
    <property type="match status" value="1"/>
</dbReference>
<keyword id="KW-0002">3D-structure</keyword>
<keyword id="KW-1003">Cell membrane</keyword>
<keyword id="KW-0143">Chaperone</keyword>
<keyword id="KW-0186">Copper</keyword>
<keyword id="KW-0449">Lipoprotein</keyword>
<keyword id="KW-0472">Membrane</keyword>
<keyword id="KW-0479">Metal-binding</keyword>
<keyword id="KW-0564">Palmitate</keyword>
<keyword id="KW-0732">Signal</keyword>
<protein>
    <recommendedName>
        <fullName evidence="1">Copper-binding lipoprotein NosL</fullName>
    </recommendedName>
</protein>
<accession>Q52529</accession>
<sequence length="190" mass="20443">MNALHRIGAGTLLAVLLAFGLTGCGEKEEVQQSLEPVAFHDSDECHVCGMIITDFPGPKGQAVEKRGVKKFCSTAEMLGWWLQPENRLLDAKLYVHDMGRSVWEKPDDGHLIDATSAYYVVGTSLKGAMGASLASFAEEQDAKALAGMHGGRVLRFEEIDQALLQEAASMQHGGMHDHAPNGAHNAHAGH</sequence>
<reference key="1">
    <citation type="journal article" date="1990" name="Eur. J. Biochem.">
        <title>Nitrous oxide reductase from denitrifying Pseudomonas stutzeri. Genes for copper-processing and properties of the deduced products, including a new member of the family of ATP/GTP-binding proteins.</title>
        <authorList>
            <person name="Zumft W.G."/>
            <person name="Viebrock-Sambale A."/>
            <person name="Braun C."/>
        </authorList>
    </citation>
    <scope>NUCLEOTIDE SEQUENCE [GENOMIC DNA]</scope>
    <source>
        <strain>ATCC 14405 / JCM 20778 / CIP 107696 / IAM 12931 / LMG 2243 / NCIMB 568 / Baumann 218 / ZoBell 632</strain>
    </source>
</reference>
<reference key="2">
    <citation type="journal article" date="2003" name="J. Bacteriol.">
        <title>Operon structure and regulation of the nos gene region of Pseudomonas stutzeri, encoding an ABC-Type ATPase for maturation of nitrous oxide reductase.</title>
        <authorList>
            <person name="Honisch U."/>
            <person name="Zumft W.G."/>
        </authorList>
    </citation>
    <scope>INDUCTION</scope>
    <source>
        <strain>ATCC 14405 / JCM 20778 / CIP 107696 / IAM 12931 / LMG 2243 / NCIMB 568 / Baumann 218 / ZoBell 632</strain>
    </source>
</reference>